<organism>
    <name type="scientific">Acanthamoeba polyphaga mimivirus</name>
    <name type="common">APMV</name>
    <dbReference type="NCBI Taxonomy" id="212035"/>
    <lineage>
        <taxon>Viruses</taxon>
        <taxon>Varidnaviria</taxon>
        <taxon>Bamfordvirae</taxon>
        <taxon>Nucleocytoviricota</taxon>
        <taxon>Megaviricetes</taxon>
        <taxon>Imitervirales</taxon>
        <taxon>Mimiviridae</taxon>
        <taxon>Megamimivirinae</taxon>
        <taxon>Mimivirus</taxon>
        <taxon>Mimivirus bradfordmassiliense</taxon>
    </lineage>
</organism>
<protein>
    <recommendedName>
        <fullName>Uncharacterized protein L28</fullName>
    </recommendedName>
</protein>
<reference key="1">
    <citation type="journal article" date="2004" name="Science">
        <title>The 1.2-megabase genome sequence of Mimivirus.</title>
        <authorList>
            <person name="Raoult D."/>
            <person name="Audic S."/>
            <person name="Robert C."/>
            <person name="Abergel C."/>
            <person name="Renesto P."/>
            <person name="Ogata H."/>
            <person name="La Scola B."/>
            <person name="Susan M."/>
            <person name="Claverie J.-M."/>
        </authorList>
    </citation>
    <scope>NUCLEOTIDE SEQUENCE [LARGE SCALE GENOMIC DNA]</scope>
    <source>
        <strain>Rowbotham-Bradford</strain>
    </source>
</reference>
<dbReference type="EMBL" id="AY653733">
    <property type="protein sequence ID" value="AAV50303.1"/>
    <property type="molecule type" value="Genomic_DNA"/>
</dbReference>
<dbReference type="SMR" id="Q5UPA9"/>
<dbReference type="KEGG" id="vg:9924606"/>
<dbReference type="Proteomes" id="UP000001134">
    <property type="component" value="Genome"/>
</dbReference>
<accession>Q5UPA9</accession>
<evidence type="ECO:0000305" key="1"/>
<comment type="similarity">
    <text evidence="1">Belongs to the mimivirus L28/L54 family.</text>
</comment>
<proteinExistence type="inferred from homology"/>
<keyword id="KW-1185">Reference proteome</keyword>
<gene>
    <name type="ordered locus">MIMI_L28</name>
</gene>
<sequence>MCWVGENIEKTTKINYRYDDVNKVLDKINSCIVDKYNANKYVLCTHEILLKKKVSLHRYLIAVSDADDLTPEILDYLKFNYPDVKVLTELPESADKLNKIIENN</sequence>
<name>YL028_MIMIV</name>
<organismHost>
    <name type="scientific">Acanthamoeba polyphaga</name>
    <name type="common">Amoeba</name>
    <dbReference type="NCBI Taxonomy" id="5757"/>
</organismHost>
<feature type="chain" id="PRO_0000071186" description="Uncharacterized protein L28">
    <location>
        <begin position="1"/>
        <end position="104"/>
    </location>
</feature>